<organism>
    <name type="scientific">Mus musculus</name>
    <name type="common">Mouse</name>
    <dbReference type="NCBI Taxonomy" id="10090"/>
    <lineage>
        <taxon>Eukaryota</taxon>
        <taxon>Metazoa</taxon>
        <taxon>Chordata</taxon>
        <taxon>Craniata</taxon>
        <taxon>Vertebrata</taxon>
        <taxon>Euteleostomi</taxon>
        <taxon>Mammalia</taxon>
        <taxon>Eutheria</taxon>
        <taxon>Euarchontoglires</taxon>
        <taxon>Glires</taxon>
        <taxon>Rodentia</taxon>
        <taxon>Myomorpha</taxon>
        <taxon>Muroidea</taxon>
        <taxon>Muridae</taxon>
        <taxon>Murinae</taxon>
        <taxon>Mus</taxon>
        <taxon>Mus</taxon>
    </lineage>
</organism>
<comment type="induction">
    <text>By retinoic acid.</text>
</comment>
<name>RAI2_MOUSE</name>
<keyword id="KW-1185">Reference proteome</keyword>
<reference key="1">
    <citation type="journal article" date="1994" name="Dev. Biol.">
        <title>Isolation and developmental expression of retinoic-acid-induced genes.</title>
        <authorList>
            <person name="Jonk L.J.C."/>
            <person name="de Jonge M.E."/>
            <person name="Vervaart J.M."/>
            <person name="Wissink S."/>
            <person name="Kruijer W."/>
        </authorList>
    </citation>
    <scope>NUCLEOTIDE SEQUENCE [MRNA]</scope>
</reference>
<reference key="2">
    <citation type="journal article" date="2005" name="Science">
        <title>The transcriptional landscape of the mammalian genome.</title>
        <authorList>
            <person name="Carninci P."/>
            <person name="Kasukawa T."/>
            <person name="Katayama S."/>
            <person name="Gough J."/>
            <person name="Frith M.C."/>
            <person name="Maeda N."/>
            <person name="Oyama R."/>
            <person name="Ravasi T."/>
            <person name="Lenhard B."/>
            <person name="Wells C."/>
            <person name="Kodzius R."/>
            <person name="Shimokawa K."/>
            <person name="Bajic V.B."/>
            <person name="Brenner S.E."/>
            <person name="Batalov S."/>
            <person name="Forrest A.R."/>
            <person name="Zavolan M."/>
            <person name="Davis M.J."/>
            <person name="Wilming L.G."/>
            <person name="Aidinis V."/>
            <person name="Allen J.E."/>
            <person name="Ambesi-Impiombato A."/>
            <person name="Apweiler R."/>
            <person name="Aturaliya R.N."/>
            <person name="Bailey T.L."/>
            <person name="Bansal M."/>
            <person name="Baxter L."/>
            <person name="Beisel K.W."/>
            <person name="Bersano T."/>
            <person name="Bono H."/>
            <person name="Chalk A.M."/>
            <person name="Chiu K.P."/>
            <person name="Choudhary V."/>
            <person name="Christoffels A."/>
            <person name="Clutterbuck D.R."/>
            <person name="Crowe M.L."/>
            <person name="Dalla E."/>
            <person name="Dalrymple B.P."/>
            <person name="de Bono B."/>
            <person name="Della Gatta G."/>
            <person name="di Bernardo D."/>
            <person name="Down T."/>
            <person name="Engstrom P."/>
            <person name="Fagiolini M."/>
            <person name="Faulkner G."/>
            <person name="Fletcher C.F."/>
            <person name="Fukushima T."/>
            <person name="Furuno M."/>
            <person name="Futaki S."/>
            <person name="Gariboldi M."/>
            <person name="Georgii-Hemming P."/>
            <person name="Gingeras T.R."/>
            <person name="Gojobori T."/>
            <person name="Green R.E."/>
            <person name="Gustincich S."/>
            <person name="Harbers M."/>
            <person name="Hayashi Y."/>
            <person name="Hensch T.K."/>
            <person name="Hirokawa N."/>
            <person name="Hill D."/>
            <person name="Huminiecki L."/>
            <person name="Iacono M."/>
            <person name="Ikeo K."/>
            <person name="Iwama A."/>
            <person name="Ishikawa T."/>
            <person name="Jakt M."/>
            <person name="Kanapin A."/>
            <person name="Katoh M."/>
            <person name="Kawasawa Y."/>
            <person name="Kelso J."/>
            <person name="Kitamura H."/>
            <person name="Kitano H."/>
            <person name="Kollias G."/>
            <person name="Krishnan S.P."/>
            <person name="Kruger A."/>
            <person name="Kummerfeld S.K."/>
            <person name="Kurochkin I.V."/>
            <person name="Lareau L.F."/>
            <person name="Lazarevic D."/>
            <person name="Lipovich L."/>
            <person name="Liu J."/>
            <person name="Liuni S."/>
            <person name="McWilliam S."/>
            <person name="Madan Babu M."/>
            <person name="Madera M."/>
            <person name="Marchionni L."/>
            <person name="Matsuda H."/>
            <person name="Matsuzawa S."/>
            <person name="Miki H."/>
            <person name="Mignone F."/>
            <person name="Miyake S."/>
            <person name="Morris K."/>
            <person name="Mottagui-Tabar S."/>
            <person name="Mulder N."/>
            <person name="Nakano N."/>
            <person name="Nakauchi H."/>
            <person name="Ng P."/>
            <person name="Nilsson R."/>
            <person name="Nishiguchi S."/>
            <person name="Nishikawa S."/>
            <person name="Nori F."/>
            <person name="Ohara O."/>
            <person name="Okazaki Y."/>
            <person name="Orlando V."/>
            <person name="Pang K.C."/>
            <person name="Pavan W.J."/>
            <person name="Pavesi G."/>
            <person name="Pesole G."/>
            <person name="Petrovsky N."/>
            <person name="Piazza S."/>
            <person name="Reed J."/>
            <person name="Reid J.F."/>
            <person name="Ring B.Z."/>
            <person name="Ringwald M."/>
            <person name="Rost B."/>
            <person name="Ruan Y."/>
            <person name="Salzberg S.L."/>
            <person name="Sandelin A."/>
            <person name="Schneider C."/>
            <person name="Schoenbach C."/>
            <person name="Sekiguchi K."/>
            <person name="Semple C.A."/>
            <person name="Seno S."/>
            <person name="Sessa L."/>
            <person name="Sheng Y."/>
            <person name="Shibata Y."/>
            <person name="Shimada H."/>
            <person name="Shimada K."/>
            <person name="Silva D."/>
            <person name="Sinclair B."/>
            <person name="Sperling S."/>
            <person name="Stupka E."/>
            <person name="Sugiura K."/>
            <person name="Sultana R."/>
            <person name="Takenaka Y."/>
            <person name="Taki K."/>
            <person name="Tammoja K."/>
            <person name="Tan S.L."/>
            <person name="Tang S."/>
            <person name="Taylor M.S."/>
            <person name="Tegner J."/>
            <person name="Teichmann S.A."/>
            <person name="Ueda H.R."/>
            <person name="van Nimwegen E."/>
            <person name="Verardo R."/>
            <person name="Wei C.L."/>
            <person name="Yagi K."/>
            <person name="Yamanishi H."/>
            <person name="Zabarovsky E."/>
            <person name="Zhu S."/>
            <person name="Zimmer A."/>
            <person name="Hide W."/>
            <person name="Bult C."/>
            <person name="Grimmond S.M."/>
            <person name="Teasdale R.D."/>
            <person name="Liu E.T."/>
            <person name="Brusic V."/>
            <person name="Quackenbush J."/>
            <person name="Wahlestedt C."/>
            <person name="Mattick J.S."/>
            <person name="Hume D.A."/>
            <person name="Kai C."/>
            <person name="Sasaki D."/>
            <person name="Tomaru Y."/>
            <person name="Fukuda S."/>
            <person name="Kanamori-Katayama M."/>
            <person name="Suzuki M."/>
            <person name="Aoki J."/>
            <person name="Arakawa T."/>
            <person name="Iida J."/>
            <person name="Imamura K."/>
            <person name="Itoh M."/>
            <person name="Kato T."/>
            <person name="Kawaji H."/>
            <person name="Kawagashira N."/>
            <person name="Kawashima T."/>
            <person name="Kojima M."/>
            <person name="Kondo S."/>
            <person name="Konno H."/>
            <person name="Nakano K."/>
            <person name="Ninomiya N."/>
            <person name="Nishio T."/>
            <person name="Okada M."/>
            <person name="Plessy C."/>
            <person name="Shibata K."/>
            <person name="Shiraki T."/>
            <person name="Suzuki S."/>
            <person name="Tagami M."/>
            <person name="Waki K."/>
            <person name="Watahiki A."/>
            <person name="Okamura-Oho Y."/>
            <person name="Suzuki H."/>
            <person name="Kawai J."/>
            <person name="Hayashizaki Y."/>
        </authorList>
    </citation>
    <scope>NUCLEOTIDE SEQUENCE [LARGE SCALE MRNA]</scope>
    <source>
        <strain>C57BL/6J</strain>
        <tissue>Olfactory bulb</tissue>
    </source>
</reference>
<reference key="3">
    <citation type="journal article" date="2009" name="PLoS Biol.">
        <title>Lineage-specific biology revealed by a finished genome assembly of the mouse.</title>
        <authorList>
            <person name="Church D.M."/>
            <person name="Goodstadt L."/>
            <person name="Hillier L.W."/>
            <person name="Zody M.C."/>
            <person name="Goldstein S."/>
            <person name="She X."/>
            <person name="Bult C.J."/>
            <person name="Agarwala R."/>
            <person name="Cherry J.L."/>
            <person name="DiCuccio M."/>
            <person name="Hlavina W."/>
            <person name="Kapustin Y."/>
            <person name="Meric P."/>
            <person name="Maglott D."/>
            <person name="Birtle Z."/>
            <person name="Marques A.C."/>
            <person name="Graves T."/>
            <person name="Zhou S."/>
            <person name="Teague B."/>
            <person name="Potamousis K."/>
            <person name="Churas C."/>
            <person name="Place M."/>
            <person name="Herschleb J."/>
            <person name="Runnheim R."/>
            <person name="Forrest D."/>
            <person name="Amos-Landgraf J."/>
            <person name="Schwartz D.C."/>
            <person name="Cheng Z."/>
            <person name="Lindblad-Toh K."/>
            <person name="Eichler E.E."/>
            <person name="Ponting C.P."/>
        </authorList>
    </citation>
    <scope>NUCLEOTIDE SEQUENCE [LARGE SCALE GENOMIC DNA]</scope>
    <source>
        <strain>C57BL/6J</strain>
    </source>
</reference>
<dbReference type="EMBL" id="X76652">
    <property type="status" value="NOT_ANNOTATED_CDS"/>
    <property type="molecule type" value="mRNA"/>
</dbReference>
<dbReference type="EMBL" id="AK143442">
    <property type="protein sequence ID" value="BAE25377.1"/>
    <property type="molecule type" value="mRNA"/>
</dbReference>
<dbReference type="EMBL" id="AL732391">
    <property type="status" value="NOT_ANNOTATED_CDS"/>
    <property type="molecule type" value="Genomic_DNA"/>
</dbReference>
<dbReference type="CCDS" id="CCDS30507.1"/>
<dbReference type="RefSeq" id="NP_001096837.1">
    <property type="nucleotide sequence ID" value="NM_001103367.1"/>
</dbReference>
<dbReference type="RefSeq" id="NP_940801.2">
    <property type="nucleotide sequence ID" value="NM_198409.3"/>
</dbReference>
<dbReference type="FunCoup" id="Q9QVY8">
    <property type="interactions" value="1212"/>
</dbReference>
<dbReference type="STRING" id="10090.ENSMUSP00000051618"/>
<dbReference type="iPTMnet" id="Q9QVY8"/>
<dbReference type="PhosphoSitePlus" id="Q9QVY8"/>
<dbReference type="PaxDb" id="10090-ENSMUSP00000051618"/>
<dbReference type="ProteomicsDB" id="254977"/>
<dbReference type="Antibodypedia" id="35327">
    <property type="antibodies" value="40 antibodies from 18 providers"/>
</dbReference>
<dbReference type="Ensembl" id="ENSMUST00000061514.8">
    <property type="protein sequence ID" value="ENSMUSP00000051618.8"/>
    <property type="gene ID" value="ENSMUSG00000043518.8"/>
</dbReference>
<dbReference type="Ensembl" id="ENSMUST00000112338.2">
    <property type="protein sequence ID" value="ENSMUSP00000107957.2"/>
    <property type="gene ID" value="ENSMUSG00000043518.8"/>
</dbReference>
<dbReference type="GeneID" id="24004"/>
<dbReference type="KEGG" id="mmu:24004"/>
<dbReference type="UCSC" id="uc009uua.2">
    <property type="organism name" value="mouse"/>
</dbReference>
<dbReference type="AGR" id="MGI:1344378"/>
<dbReference type="CTD" id="10742"/>
<dbReference type="MGI" id="MGI:1344378">
    <property type="gene designation" value="Rai2"/>
</dbReference>
<dbReference type="VEuPathDB" id="HostDB:ENSMUSG00000043518"/>
<dbReference type="eggNOG" id="ENOG502RCMZ">
    <property type="taxonomic scope" value="Eukaryota"/>
</dbReference>
<dbReference type="GeneTree" id="ENSGT00940000154164"/>
<dbReference type="HOGENOM" id="CLU_044853_0_0_1"/>
<dbReference type="InParanoid" id="Q9QVY8"/>
<dbReference type="OMA" id="QHKWLVD"/>
<dbReference type="OrthoDB" id="9936033at2759"/>
<dbReference type="TreeFam" id="TF331261"/>
<dbReference type="BioGRID-ORCS" id="24004">
    <property type="hits" value="1 hit in 76 CRISPR screens"/>
</dbReference>
<dbReference type="ChiTaRS" id="Rai2">
    <property type="organism name" value="mouse"/>
</dbReference>
<dbReference type="PRO" id="PR:Q9QVY8"/>
<dbReference type="Proteomes" id="UP000000589">
    <property type="component" value="Chromosome X"/>
</dbReference>
<dbReference type="RNAct" id="Q9QVY8">
    <property type="molecule type" value="protein"/>
</dbReference>
<dbReference type="Bgee" id="ENSMUSG00000043518">
    <property type="expression patterns" value="Expressed in myocardium of ventricle and 200 other cell types or tissues"/>
</dbReference>
<dbReference type="InterPro" id="IPR026092">
    <property type="entry name" value="RAI2/SOBP"/>
</dbReference>
<dbReference type="PANTHER" id="PTHR23186">
    <property type="entry name" value="RETINOIC ACID-INDUCED PROTEIN 2"/>
    <property type="match status" value="1"/>
</dbReference>
<dbReference type="PANTHER" id="PTHR23186:SF3">
    <property type="entry name" value="RETINOIC ACID-INDUCED PROTEIN 2"/>
    <property type="match status" value="1"/>
</dbReference>
<proteinExistence type="evidence at transcript level"/>
<evidence type="ECO:0000256" key="1">
    <source>
        <dbReference type="SAM" id="MobiDB-lite"/>
    </source>
</evidence>
<evidence type="ECO:0000305" key="2"/>
<protein>
    <recommendedName>
        <fullName>Retinoic acid-induced protein 2</fullName>
    </recommendedName>
    <alternativeName>
        <fullName>3f8</fullName>
    </alternativeName>
</protein>
<sequence length="529" mass="57123">MDDLQSQNLSMDMTDSPPTLANNRLENRMAQLITTEAWNINSTDLVKKALVTVPAPSILNPPAESQSGMALKVAATVLQPLCLGESPVVMPIHMQVEGSSAPELNPNGNATYVMTTQGPVQLPVVLEQHVFQHLNSPLVLPQEAPCSSNAIHNNLFQGAEDSEAQPQLLDLRIPSQPQEPALPFEAVLQNLFPTQGSLGPPPCQPPPGYAPVPPQPFNSPLSPLVPPATLLVPYPVIVPLPVPVPIPIPVPVPQSTESKFSPTFPKPPSSFGLHSFKGTQTTLEKDELKPLDILQSKEYFQLSRHTVIKMGSENEALDLSMKSVPWLKAGEASPPVFQEDAALDLSLAAHRKAEAPPETLYNNSGSADIQGHTILEKLSSGMEMPFAPAKCSEASAMMESHSSNSNGTEMVSQPSHPGSELKAENNIEILSESQAAKVIVSVEDAVPAIFCGKIKGLSGVSTKNFSFKREDSVLQGYDINSQGEESLGNAEPLRKPIKNRSIKLKKVNSQEIHMLPIKKQRLATFFPRK</sequence>
<gene>
    <name type="primary">Rai2</name>
</gene>
<feature type="chain" id="PRO_0000097162" description="Retinoic acid-induced protein 2">
    <location>
        <begin position="1"/>
        <end position="529"/>
    </location>
</feature>
<feature type="region of interest" description="Disordered" evidence="1">
    <location>
        <begin position="1"/>
        <end position="21"/>
    </location>
</feature>
<feature type="region of interest" description="Disordered" evidence="1">
    <location>
        <begin position="400"/>
        <end position="419"/>
    </location>
</feature>
<feature type="compositionally biased region" description="Polar residues" evidence="1">
    <location>
        <begin position="407"/>
        <end position="416"/>
    </location>
</feature>
<feature type="sequence conflict" description="In Ref. 1; X76652." evidence="2" ref="1">
    <original>A</original>
    <variation>G</variation>
    <location>
        <position position="55"/>
    </location>
</feature>
<feature type="sequence conflict" description="In Ref. 1; X76652." evidence="2" ref="1">
    <original>SQ</original>
    <variation>RK</variation>
    <location>
        <begin position="175"/>
        <end position="176"/>
    </location>
</feature>
<accession>Q9QVY8</accession>
<accession>Q3UPL8</accession>